<accession>Q54HE0</accession>
<evidence type="ECO:0000250" key="1">
    <source>
        <dbReference type="UniProtKB" id="Q9UP83"/>
    </source>
</evidence>
<evidence type="ECO:0000255" key="2"/>
<evidence type="ECO:0000256" key="3">
    <source>
        <dbReference type="SAM" id="MobiDB-lite"/>
    </source>
</evidence>
<feature type="chain" id="PRO_0000341616" description="Conserved oligomeric Golgi complex subunit 5">
    <location>
        <begin position="1"/>
        <end position="898"/>
    </location>
</feature>
<feature type="region of interest" description="Disordered" evidence="3">
    <location>
        <begin position="1"/>
        <end position="30"/>
    </location>
</feature>
<feature type="region of interest" description="Disordered" evidence="3">
    <location>
        <begin position="311"/>
        <end position="339"/>
    </location>
</feature>
<feature type="region of interest" description="Disordered" evidence="3">
    <location>
        <begin position="519"/>
        <end position="551"/>
    </location>
</feature>
<feature type="region of interest" description="Disordered" evidence="3">
    <location>
        <begin position="679"/>
        <end position="705"/>
    </location>
</feature>
<feature type="coiled-coil region" evidence="2">
    <location>
        <begin position="129"/>
        <end position="192"/>
    </location>
</feature>
<feature type="compositionally biased region" description="Low complexity" evidence="3">
    <location>
        <begin position="679"/>
        <end position="702"/>
    </location>
</feature>
<protein>
    <recommendedName>
        <fullName>Conserved oligomeric Golgi complex subunit 5</fullName>
        <shortName>COG complex subunit 5</shortName>
    </recommendedName>
    <alternativeName>
        <fullName>Component of oligomeric Golgi complex 5</fullName>
    </alternativeName>
</protein>
<name>COG5_DICDI</name>
<sequence>MNNNNNNNEGVSSSSSSSSSPLPNISSPNLISNSNIENDIEIKKKSNNNNNNIFEGDNSHIYNQFLGEDFNVVHYTSNALKVSSISLSLNTLTSCTRELGQELTENITTNYDDLFKLANNIKELDQLTDTLKLGVSNLEESIQRMKNDISEPYNKVKSHIGQLKRVQDSCELLRKLIRYIQLVKKLKNHLQAGSRDLSKSAQCINEINLLKKDSDLTGINIIDSQVVWIKTCSDQIITISSTLLYQGMENQNQTDVANSLQVFHNMTILNEKVYSIVNLTTEKVIKNIKALLNVNKLIADLPKTTITNNINNNNSNNNITTNNNNNNYNNNNNNNNNNNIISTSTDKSIWLKFESLIDTLYSSLIQILHLQRVLLKIKDPLTHKSLMEVLLIKQHQLQQQQQQQQQQQQQQQQQQQQQQQQQQQVGTTSNNTQPILIEMISTLFWKSILKVLENNLLVAAKSSNIIENTFIREYPKVSKFFLDFIKKLQNYIDIHQMDIQQQFMIVLSNINQIIGNNNSNNSNSNSNNSIESSLSTSSSSSSSSSSSSSTTTTATTSLILLSADDYKLSLFKSIGLFEKAYLEYSQSKMSTIVNGLFPQSTWSSRSTLPVIPNGKQLVDLSKTIWSEIEWLVGNNDRQLLGKLMLVVSKVIDLFSSKIESMVQPPGLIVLNSNIGSSSSTGGVNNNSNSNNNNEIITINENSKPTPSQTVNTLLFNVSIQLNSSIQSLLTSQPLERESIIVIEKSLNSLITICTNIITPLMNSFFTHIEQIFSTIHNEDWYNEKTTKMLINKSNQTCSSYMESFKTLVNYFQNQYLMRFTPCQLLNNQIKSMISKIFIVYLKYCSLLKQPFSENGKLKMVNDLTHLEFAVTPLLVSGGIKEIGESYNLIRNYKQSIFN</sequence>
<gene>
    <name type="primary">cog5</name>
    <name type="ORF">DDB_G0289535</name>
</gene>
<organism>
    <name type="scientific">Dictyostelium discoideum</name>
    <name type="common">Social amoeba</name>
    <dbReference type="NCBI Taxonomy" id="44689"/>
    <lineage>
        <taxon>Eukaryota</taxon>
        <taxon>Amoebozoa</taxon>
        <taxon>Evosea</taxon>
        <taxon>Eumycetozoa</taxon>
        <taxon>Dictyostelia</taxon>
        <taxon>Dictyosteliales</taxon>
        <taxon>Dictyosteliaceae</taxon>
        <taxon>Dictyostelium</taxon>
    </lineage>
</organism>
<dbReference type="EMBL" id="AAFI02000141">
    <property type="protein sequence ID" value="EAL62699.1"/>
    <property type="molecule type" value="Genomic_DNA"/>
</dbReference>
<dbReference type="RefSeq" id="XP_636198.1">
    <property type="nucleotide sequence ID" value="XM_631106.1"/>
</dbReference>
<dbReference type="SMR" id="Q54HE0"/>
<dbReference type="FunCoup" id="Q54HE0">
    <property type="interactions" value="154"/>
</dbReference>
<dbReference type="STRING" id="44689.Q54HE0"/>
<dbReference type="GlyGen" id="Q54HE0">
    <property type="glycosylation" value="1 site"/>
</dbReference>
<dbReference type="PaxDb" id="44689-DDB0237951"/>
<dbReference type="EnsemblProtists" id="EAL62699">
    <property type="protein sequence ID" value="EAL62699"/>
    <property type="gene ID" value="DDB_G0289535"/>
</dbReference>
<dbReference type="GeneID" id="8627185"/>
<dbReference type="KEGG" id="ddi:DDB_G0289535"/>
<dbReference type="dictyBase" id="DDB_G0289535">
    <property type="gene designation" value="cog5"/>
</dbReference>
<dbReference type="VEuPathDB" id="AmoebaDB:DDB_G0289535"/>
<dbReference type="eggNOG" id="KOG2211">
    <property type="taxonomic scope" value="Eukaryota"/>
</dbReference>
<dbReference type="HOGENOM" id="CLU_009839_1_1_1"/>
<dbReference type="InParanoid" id="Q54HE0"/>
<dbReference type="PhylomeDB" id="Q54HE0"/>
<dbReference type="Reactome" id="R-DDI-6807878">
    <property type="pathway name" value="COPI-mediated anterograde transport"/>
</dbReference>
<dbReference type="Reactome" id="R-DDI-6811438">
    <property type="pathway name" value="Intra-Golgi traffic"/>
</dbReference>
<dbReference type="PRO" id="PR:Q54HE0"/>
<dbReference type="Proteomes" id="UP000002195">
    <property type="component" value="Chromosome 5"/>
</dbReference>
<dbReference type="GO" id="GO:0000139">
    <property type="term" value="C:Golgi membrane"/>
    <property type="evidence" value="ECO:0007669"/>
    <property type="project" value="UniProtKB-SubCell"/>
</dbReference>
<dbReference type="GO" id="GO:0017119">
    <property type="term" value="C:Golgi transport complex"/>
    <property type="evidence" value="ECO:0000318"/>
    <property type="project" value="GO_Central"/>
</dbReference>
<dbReference type="GO" id="GO:0006891">
    <property type="term" value="P:intra-Golgi vesicle-mediated transport"/>
    <property type="evidence" value="ECO:0000318"/>
    <property type="project" value="GO_Central"/>
</dbReference>
<dbReference type="GO" id="GO:0015031">
    <property type="term" value="P:protein transport"/>
    <property type="evidence" value="ECO:0007669"/>
    <property type="project" value="UniProtKB-KW"/>
</dbReference>
<dbReference type="InterPro" id="IPR019465">
    <property type="entry name" value="Cog5"/>
</dbReference>
<dbReference type="InterPro" id="IPR048485">
    <property type="entry name" value="COG5_helical"/>
</dbReference>
<dbReference type="InterPro" id="IPR049176">
    <property type="entry name" value="COG5_N"/>
</dbReference>
<dbReference type="PANTHER" id="PTHR13228">
    <property type="entry name" value="CONSERVED OLIGOMERIC GOLGI COMPLEX COMPONENT 5"/>
    <property type="match status" value="1"/>
</dbReference>
<dbReference type="PANTHER" id="PTHR13228:SF3">
    <property type="entry name" value="CONSERVED OLIGOMERIC GOLGI COMPLEX SUBUNIT 5"/>
    <property type="match status" value="1"/>
</dbReference>
<dbReference type="Pfam" id="PF20649">
    <property type="entry name" value="COG5_C"/>
    <property type="match status" value="1"/>
</dbReference>
<dbReference type="Pfam" id="PF10392">
    <property type="entry name" value="COG5_N"/>
    <property type="match status" value="1"/>
</dbReference>
<proteinExistence type="inferred from homology"/>
<keyword id="KW-0175">Coiled coil</keyword>
<keyword id="KW-0333">Golgi apparatus</keyword>
<keyword id="KW-0472">Membrane</keyword>
<keyword id="KW-0653">Protein transport</keyword>
<keyword id="KW-1185">Reference proteome</keyword>
<keyword id="KW-0813">Transport</keyword>
<reference key="1">
    <citation type="journal article" date="2005" name="Nature">
        <title>The genome of the social amoeba Dictyostelium discoideum.</title>
        <authorList>
            <person name="Eichinger L."/>
            <person name="Pachebat J.A."/>
            <person name="Gloeckner G."/>
            <person name="Rajandream M.A."/>
            <person name="Sucgang R."/>
            <person name="Berriman M."/>
            <person name="Song J."/>
            <person name="Olsen R."/>
            <person name="Szafranski K."/>
            <person name="Xu Q."/>
            <person name="Tunggal B."/>
            <person name="Kummerfeld S."/>
            <person name="Madera M."/>
            <person name="Konfortov B.A."/>
            <person name="Rivero F."/>
            <person name="Bankier A.T."/>
            <person name="Lehmann R."/>
            <person name="Hamlin N."/>
            <person name="Davies R."/>
            <person name="Gaudet P."/>
            <person name="Fey P."/>
            <person name="Pilcher K."/>
            <person name="Chen G."/>
            <person name="Saunders D."/>
            <person name="Sodergren E.J."/>
            <person name="Davis P."/>
            <person name="Kerhornou A."/>
            <person name="Nie X."/>
            <person name="Hall N."/>
            <person name="Anjard C."/>
            <person name="Hemphill L."/>
            <person name="Bason N."/>
            <person name="Farbrother P."/>
            <person name="Desany B."/>
            <person name="Just E."/>
            <person name="Morio T."/>
            <person name="Rost R."/>
            <person name="Churcher C.M."/>
            <person name="Cooper J."/>
            <person name="Haydock S."/>
            <person name="van Driessche N."/>
            <person name="Cronin A."/>
            <person name="Goodhead I."/>
            <person name="Muzny D.M."/>
            <person name="Mourier T."/>
            <person name="Pain A."/>
            <person name="Lu M."/>
            <person name="Harper D."/>
            <person name="Lindsay R."/>
            <person name="Hauser H."/>
            <person name="James K.D."/>
            <person name="Quiles M."/>
            <person name="Madan Babu M."/>
            <person name="Saito T."/>
            <person name="Buchrieser C."/>
            <person name="Wardroper A."/>
            <person name="Felder M."/>
            <person name="Thangavelu M."/>
            <person name="Johnson D."/>
            <person name="Knights A."/>
            <person name="Loulseged H."/>
            <person name="Mungall K.L."/>
            <person name="Oliver K."/>
            <person name="Price C."/>
            <person name="Quail M.A."/>
            <person name="Urushihara H."/>
            <person name="Hernandez J."/>
            <person name="Rabbinowitsch E."/>
            <person name="Steffen D."/>
            <person name="Sanders M."/>
            <person name="Ma J."/>
            <person name="Kohara Y."/>
            <person name="Sharp S."/>
            <person name="Simmonds M.N."/>
            <person name="Spiegler S."/>
            <person name="Tivey A."/>
            <person name="Sugano S."/>
            <person name="White B."/>
            <person name="Walker D."/>
            <person name="Woodward J.R."/>
            <person name="Winckler T."/>
            <person name="Tanaka Y."/>
            <person name="Shaulsky G."/>
            <person name="Schleicher M."/>
            <person name="Weinstock G.M."/>
            <person name="Rosenthal A."/>
            <person name="Cox E.C."/>
            <person name="Chisholm R.L."/>
            <person name="Gibbs R.A."/>
            <person name="Loomis W.F."/>
            <person name="Platzer M."/>
            <person name="Kay R.R."/>
            <person name="Williams J.G."/>
            <person name="Dear P.H."/>
            <person name="Noegel A.A."/>
            <person name="Barrell B.G."/>
            <person name="Kuspa A."/>
        </authorList>
    </citation>
    <scope>NUCLEOTIDE SEQUENCE [LARGE SCALE GENOMIC DNA]</scope>
    <source>
        <strain>AX4</strain>
    </source>
</reference>
<comment type="subcellular location">
    <subcellularLocation>
        <location evidence="1">Golgi apparatus membrane</location>
        <topology evidence="1">Peripheral membrane protein</topology>
    </subcellularLocation>
</comment>